<sequence length="96" mass="11359">MIMILYWSLPMILFILGLFCFVSNRKHLLSMLLSLEFIVLMLFFMLFIYLNMLNYESYFSMMFLTFSVCEGALGLSILVSMIRTHGNDYFQSFSIM</sequence>
<dbReference type="EC" id="7.1.1.2"/>
<dbReference type="EMBL" id="M37275">
    <property type="protein sequence ID" value="AAA69712.1"/>
    <property type="molecule type" value="Genomic_DNA"/>
</dbReference>
<dbReference type="EMBL" id="AF200828">
    <property type="protein sequence ID" value="AAF77235.1"/>
    <property type="molecule type" value="Genomic_DNA"/>
</dbReference>
<dbReference type="EMBL" id="AF200829">
    <property type="protein sequence ID" value="AAF77247.1"/>
    <property type="molecule type" value="Genomic_DNA"/>
</dbReference>
<dbReference type="EMBL" id="AJ400907">
    <property type="protein sequence ID" value="CAB91060.1"/>
    <property type="molecule type" value="Genomic_DNA"/>
</dbReference>
<dbReference type="EMBL" id="U37541">
    <property type="protein sequence ID" value="AAC47820.1"/>
    <property type="molecule type" value="Genomic_DNA"/>
</dbReference>
<dbReference type="EMBL" id="KJ947872">
    <property type="protein sequence ID" value="AIC64013.1"/>
    <property type="molecule type" value="Genomic_DNA"/>
</dbReference>
<dbReference type="PIR" id="S01188">
    <property type="entry name" value="S01188"/>
</dbReference>
<dbReference type="RefSeq" id="YP_009047275.1">
    <property type="nucleotide sequence ID" value="NC_024511.2"/>
</dbReference>
<dbReference type="PDB" id="8B9Z">
    <property type="method" value="EM"/>
    <property type="resolution" value="3.28 A"/>
    <property type="chains" value="K=1-96"/>
</dbReference>
<dbReference type="PDB" id="8BA0">
    <property type="method" value="EM"/>
    <property type="resolution" value="3.68 A"/>
    <property type="chains" value="K=1-93"/>
</dbReference>
<dbReference type="PDB" id="8ESW">
    <property type="method" value="EM"/>
    <property type="resolution" value="3.30 A"/>
    <property type="chains" value="4L=1-96"/>
</dbReference>
<dbReference type="PDB" id="8ESZ">
    <property type="method" value="EM"/>
    <property type="resolution" value="3.40 A"/>
    <property type="chains" value="4L=1-96"/>
</dbReference>
<dbReference type="PDBsum" id="8B9Z"/>
<dbReference type="PDBsum" id="8BA0"/>
<dbReference type="PDBsum" id="8ESW"/>
<dbReference type="PDBsum" id="8ESZ"/>
<dbReference type="EMDB" id="EMD-15936"/>
<dbReference type="EMDB" id="EMD-15937"/>
<dbReference type="EMDB" id="EMD-28581"/>
<dbReference type="EMDB" id="EMD-28582"/>
<dbReference type="SMR" id="P18934"/>
<dbReference type="ComplexPortal" id="CPX-8628">
    <property type="entry name" value="Mitochondrial respiratory chain complex I"/>
</dbReference>
<dbReference type="ComplexPortal" id="CPX-8638">
    <property type="entry name" value="Mitochondrial respiratory chain complex I, testis-specific variant"/>
</dbReference>
<dbReference type="FunCoup" id="P18934">
    <property type="interactions" value="144"/>
</dbReference>
<dbReference type="STRING" id="7227.FBpp0100184"/>
<dbReference type="PaxDb" id="7227-FBpp0100184"/>
<dbReference type="EnsemblMetazoa" id="FBtr0100880">
    <property type="protein sequence ID" value="FBpp0100184"/>
    <property type="gene ID" value="FBgn0013683"/>
</dbReference>
<dbReference type="GeneID" id="19893552"/>
<dbReference type="KEGG" id="dme:Dmel_CG34086"/>
<dbReference type="AGR" id="FB:FBgn0013683"/>
<dbReference type="CTD" id="4539"/>
<dbReference type="FlyBase" id="FBgn0013683">
    <property type="gene designation" value="mt:ND4L"/>
</dbReference>
<dbReference type="VEuPathDB" id="VectorBase:FBgn0013683"/>
<dbReference type="eggNOG" id="KOG4669">
    <property type="taxonomic scope" value="Eukaryota"/>
</dbReference>
<dbReference type="HOGENOM" id="CLU_182394_0_0_1"/>
<dbReference type="InParanoid" id="P18934"/>
<dbReference type="OMA" id="MYRSHLM"/>
<dbReference type="OrthoDB" id="6146597at2759"/>
<dbReference type="PhylomeDB" id="P18934"/>
<dbReference type="BioGRID-ORCS" id="19893552">
    <property type="hits" value="0 hits in 1 CRISPR screen"/>
</dbReference>
<dbReference type="GenomeRNAi" id="19893552"/>
<dbReference type="PRO" id="PR:P18934"/>
<dbReference type="Proteomes" id="UP000000803">
    <property type="component" value="Mitochondrion"/>
</dbReference>
<dbReference type="Bgee" id="FBgn0013683">
    <property type="expression patterns" value="Expressed in arthropod fat body and 35 other cell types or tissues"/>
</dbReference>
<dbReference type="ExpressionAtlas" id="P18934">
    <property type="expression patterns" value="baseline"/>
</dbReference>
<dbReference type="GO" id="GO:0005743">
    <property type="term" value="C:mitochondrial inner membrane"/>
    <property type="evidence" value="ECO:0000305"/>
    <property type="project" value="FlyBase"/>
</dbReference>
<dbReference type="GO" id="GO:0045271">
    <property type="term" value="C:respiratory chain complex I"/>
    <property type="evidence" value="ECO:0000314"/>
    <property type="project" value="FlyBase"/>
</dbReference>
<dbReference type="GO" id="GO:0008137">
    <property type="term" value="F:NADH dehydrogenase (ubiquinone) activity"/>
    <property type="evidence" value="ECO:0000303"/>
    <property type="project" value="FlyBase"/>
</dbReference>
<dbReference type="GO" id="GO:0006120">
    <property type="term" value="P:mitochondrial electron transport, NADH to ubiquinone"/>
    <property type="evidence" value="ECO:0000305"/>
    <property type="project" value="FlyBase"/>
</dbReference>
<dbReference type="FunFam" id="1.10.287.3510:FF:000003">
    <property type="entry name" value="NADH-ubiquinone oxidoreductase chain 4L"/>
    <property type="match status" value="1"/>
</dbReference>
<dbReference type="Gene3D" id="1.10.287.3510">
    <property type="match status" value="1"/>
</dbReference>
<dbReference type="InterPro" id="IPR001133">
    <property type="entry name" value="NADH_UbQ_OxRdtase_chain4L/K"/>
</dbReference>
<dbReference type="InterPro" id="IPR039428">
    <property type="entry name" value="NUOK/Mnh_C1-like"/>
</dbReference>
<dbReference type="PANTHER" id="PTHR11434:SF0">
    <property type="entry name" value="NADH-UBIQUINONE OXIDOREDUCTASE CHAIN 4L"/>
    <property type="match status" value="1"/>
</dbReference>
<dbReference type="PANTHER" id="PTHR11434">
    <property type="entry name" value="NADH-UBIQUINONE OXIDOREDUCTASE SUBUNIT ND4L"/>
    <property type="match status" value="1"/>
</dbReference>
<dbReference type="Pfam" id="PF00420">
    <property type="entry name" value="Oxidored_q2"/>
    <property type="match status" value="1"/>
</dbReference>
<reference key="1">
    <citation type="journal article" date="1988" name="Genetics">
        <title>Drosophila melanogaster mitochondrial DNA: gene organization and evolutionary considerations.</title>
        <authorList>
            <person name="Garesse R."/>
        </authorList>
    </citation>
    <scope>NUCLEOTIDE SEQUENCE [GENOMIC DNA]</scope>
    <source>
        <strain>Bretagne</strain>
    </source>
</reference>
<reference key="2">
    <citation type="journal article" date="2000" name="J. Mol. Evol.">
        <title>Comparative genomics of mitochondrial DNA in members of the Drosophila melanogaster subgroup.</title>
        <authorList>
            <person name="Ballard J.W.O."/>
        </authorList>
    </citation>
    <scope>NUCLEOTIDE SEQUENCE [GENOMIC DNA]</scope>
    <source>
        <strain>Oregon-R</strain>
        <strain>Zimbabwe 53</strain>
    </source>
</reference>
<reference key="3">
    <citation type="journal article" date="2001" name="Heredity">
        <title>I-R system of hybrid dysgenesis in Drosophila melanogaster: analysis of the mitochondrial DNA in reactive strains exhibiting different potentials for I factor transposition.</title>
        <authorList>
            <person name="Azou Y."/>
            <person name="Bregliano J.C."/>
        </authorList>
    </citation>
    <scope>NUCLEOTIDE SEQUENCE [GENOMIC DNA]</scope>
    <source>
        <strain>Paris</strain>
    </source>
</reference>
<reference key="4">
    <citation type="journal article" date="1995" name="Insect Mol. Biol.">
        <title>Drosophila melanogaster mitochondrial DNA: completion of the nucleotide sequence and evolutionary comparisons.</title>
        <authorList>
            <person name="Lewis D.L."/>
            <person name="Farr C.L."/>
            <person name="Kaguni L.S."/>
        </authorList>
    </citation>
    <scope>NUCLEOTIDE SEQUENCE [LARGE SCALE GENOMIC DNA]</scope>
</reference>
<reference key="5">
    <citation type="submission" date="2014-08" db="EMBL/GenBank/DDBJ databases">
        <authorList>
            <person name="Wan K."/>
            <person name="Celniker S."/>
        </authorList>
    </citation>
    <scope>NUCLEOTIDE SEQUENCE [LARGE SCALE GENOMIC DNA]</scope>
    <source>
        <strain>Berkeley</strain>
    </source>
</reference>
<accession>P18934</accession>
<accession>Q7HM98</accession>
<comment type="function">
    <text evidence="1">Core subunit of the mitochondrial membrane respiratory chain NADH dehydrogenase (Complex I) that is believed to belong to the minimal assembly required for catalysis. Complex I functions in the transfer of electrons from NADH to the respiratory chain. The immediate electron acceptor for the enzyme is believed to be ubiquinone (By similarity).</text>
</comment>
<comment type="catalytic activity">
    <reaction>
        <text>a ubiquinone + NADH + 5 H(+)(in) = a ubiquinol + NAD(+) + 4 H(+)(out)</text>
        <dbReference type="Rhea" id="RHEA:29091"/>
        <dbReference type="Rhea" id="RHEA-COMP:9565"/>
        <dbReference type="Rhea" id="RHEA-COMP:9566"/>
        <dbReference type="ChEBI" id="CHEBI:15378"/>
        <dbReference type="ChEBI" id="CHEBI:16389"/>
        <dbReference type="ChEBI" id="CHEBI:17976"/>
        <dbReference type="ChEBI" id="CHEBI:57540"/>
        <dbReference type="ChEBI" id="CHEBI:57945"/>
        <dbReference type="EC" id="7.1.1.2"/>
    </reaction>
</comment>
<comment type="subcellular location">
    <subcellularLocation>
        <location evidence="1">Mitochondrion membrane</location>
        <topology evidence="1">Multi-pass membrane protein</topology>
    </subcellularLocation>
</comment>
<comment type="similarity">
    <text evidence="3">Belongs to the complex I subunit 4L family.</text>
</comment>
<keyword id="KW-0002">3D-structure</keyword>
<keyword id="KW-0249">Electron transport</keyword>
<keyword id="KW-0472">Membrane</keyword>
<keyword id="KW-0496">Mitochondrion</keyword>
<keyword id="KW-0520">NAD</keyword>
<keyword id="KW-1185">Reference proteome</keyword>
<keyword id="KW-0679">Respiratory chain</keyword>
<keyword id="KW-1278">Translocase</keyword>
<keyword id="KW-0812">Transmembrane</keyword>
<keyword id="KW-1133">Transmembrane helix</keyword>
<keyword id="KW-0813">Transport</keyword>
<keyword id="KW-0830">Ubiquinone</keyword>
<feature type="chain" id="PRO_0000118417" description="NADH-ubiquinone oxidoreductase chain 4L">
    <location>
        <begin position="1"/>
        <end position="96"/>
    </location>
</feature>
<feature type="transmembrane region" description="Helical" evidence="2">
    <location>
        <begin position="2"/>
        <end position="22"/>
    </location>
</feature>
<feature type="transmembrane region" description="Helical" evidence="2">
    <location>
        <begin position="28"/>
        <end position="48"/>
    </location>
</feature>
<feature type="transmembrane region" description="Helical" evidence="2">
    <location>
        <begin position="62"/>
        <end position="82"/>
    </location>
</feature>
<feature type="helix" evidence="4">
    <location>
        <begin position="2"/>
        <end position="6"/>
    </location>
</feature>
<feature type="helix" evidence="4">
    <location>
        <begin position="8"/>
        <end position="22"/>
    </location>
</feature>
<feature type="helix" evidence="4">
    <location>
        <begin position="29"/>
        <end position="52"/>
    </location>
</feature>
<feature type="strand" evidence="4">
    <location>
        <begin position="53"/>
        <end position="55"/>
    </location>
</feature>
<feature type="helix" evidence="4">
    <location>
        <begin position="59"/>
        <end position="85"/>
    </location>
</feature>
<feature type="helix" evidence="4">
    <location>
        <begin position="90"/>
        <end position="92"/>
    </location>
</feature>
<protein>
    <recommendedName>
        <fullName>NADH-ubiquinone oxidoreductase chain 4L</fullName>
        <ecNumber>7.1.1.2</ecNumber>
    </recommendedName>
    <alternativeName>
        <fullName>NADH dehydrogenase subunit 4L</fullName>
    </alternativeName>
</protein>
<geneLocation type="mitochondrion"/>
<proteinExistence type="evidence at protein level"/>
<gene>
    <name type="primary">mt:ND4L</name>
    <name type="synonym">ND4L</name>
</gene>
<organism>
    <name type="scientific">Drosophila melanogaster</name>
    <name type="common">Fruit fly</name>
    <dbReference type="NCBI Taxonomy" id="7227"/>
    <lineage>
        <taxon>Eukaryota</taxon>
        <taxon>Metazoa</taxon>
        <taxon>Ecdysozoa</taxon>
        <taxon>Arthropoda</taxon>
        <taxon>Hexapoda</taxon>
        <taxon>Insecta</taxon>
        <taxon>Pterygota</taxon>
        <taxon>Neoptera</taxon>
        <taxon>Endopterygota</taxon>
        <taxon>Diptera</taxon>
        <taxon>Brachycera</taxon>
        <taxon>Muscomorpha</taxon>
        <taxon>Ephydroidea</taxon>
        <taxon>Drosophilidae</taxon>
        <taxon>Drosophila</taxon>
        <taxon>Sophophora</taxon>
    </lineage>
</organism>
<name>NU4LM_DROME</name>
<evidence type="ECO:0000250" key="1"/>
<evidence type="ECO:0000255" key="2"/>
<evidence type="ECO:0000305" key="3"/>
<evidence type="ECO:0007829" key="4">
    <source>
        <dbReference type="PDB" id="8B9Z"/>
    </source>
</evidence>